<feature type="signal peptide" evidence="5">
    <location>
        <begin position="1"/>
        <end position="40"/>
    </location>
</feature>
<feature type="chain" id="PRO_0000292581" description="Iron-regulated surface determinant protein B">
    <location>
        <begin position="41"/>
        <end position="613"/>
    </location>
</feature>
<feature type="propeptide" id="PRO_0000292582" description="Removed by sortase" evidence="7">
    <location>
        <begin position="614"/>
        <end position="645"/>
    </location>
</feature>
<feature type="domain" description="NEAT 1" evidence="6">
    <location>
        <begin position="144"/>
        <end position="269"/>
    </location>
</feature>
<feature type="domain" description="NEAT 2" evidence="6">
    <location>
        <begin position="341"/>
        <end position="458"/>
    </location>
</feature>
<feature type="region of interest" description="Disordered" evidence="8">
    <location>
        <begin position="38"/>
        <end position="113"/>
    </location>
</feature>
<feature type="region of interest" description="Disordered" evidence="8">
    <location>
        <begin position="458"/>
        <end position="619"/>
    </location>
</feature>
<feature type="short sequence motif" description="YSIRK-G/S signaling motif" evidence="3">
    <location>
        <begin position="12"/>
        <end position="23"/>
    </location>
</feature>
<feature type="short sequence motif" description="LPXTG sorting signal" evidence="7">
    <location>
        <begin position="610"/>
        <end position="614"/>
    </location>
</feature>
<feature type="compositionally biased region" description="Low complexity" evidence="8">
    <location>
        <begin position="38"/>
        <end position="53"/>
    </location>
</feature>
<feature type="compositionally biased region" description="Basic and acidic residues" evidence="8">
    <location>
        <begin position="84"/>
        <end position="113"/>
    </location>
</feature>
<feature type="compositionally biased region" description="Basic and acidic residues" evidence="8">
    <location>
        <begin position="458"/>
        <end position="476"/>
    </location>
</feature>
<feature type="compositionally biased region" description="Basic and acidic residues" evidence="8">
    <location>
        <begin position="489"/>
        <end position="534"/>
    </location>
</feature>
<feature type="compositionally biased region" description="Low complexity" evidence="8">
    <location>
        <begin position="535"/>
        <end position="560"/>
    </location>
</feature>
<feature type="compositionally biased region" description="Polar residues" evidence="8">
    <location>
        <begin position="585"/>
        <end position="615"/>
    </location>
</feature>
<feature type="binding site" description="axial binding residue" evidence="4">
    <location>
        <position position="362"/>
    </location>
    <ligand>
        <name>heme</name>
        <dbReference type="ChEBI" id="CHEBI:30413"/>
    </ligand>
    <ligandPart>
        <name>Fe</name>
        <dbReference type="ChEBI" id="CHEBI:18248"/>
    </ligandPart>
</feature>
<feature type="binding site" description="axial binding residue" evidence="4">
    <location>
        <position position="440"/>
    </location>
    <ligand>
        <name>heme</name>
        <dbReference type="ChEBI" id="CHEBI:30413"/>
    </ligand>
    <ligandPart>
        <name>Fe</name>
        <dbReference type="ChEBI" id="CHEBI:18248"/>
    </ligandPart>
</feature>
<feature type="modified residue" description="Pentaglycyl murein peptidoglycan amidated threonine" evidence="7">
    <location>
        <position position="613"/>
    </location>
</feature>
<reference key="1">
    <citation type="journal article" date="2006" name="Lancet">
        <title>Complete genome sequence of USA300, an epidemic clone of community-acquired meticillin-resistant Staphylococcus aureus.</title>
        <authorList>
            <person name="Diep B.A."/>
            <person name="Gill S.R."/>
            <person name="Chang R.F."/>
            <person name="Phan T.H."/>
            <person name="Chen J.H."/>
            <person name="Davidson M.G."/>
            <person name="Lin F."/>
            <person name="Lin J."/>
            <person name="Carleton H.A."/>
            <person name="Mongodin E.F."/>
            <person name="Sensabaugh G.F."/>
            <person name="Perdreau-Remington F."/>
        </authorList>
    </citation>
    <scope>NUCLEOTIDE SEQUENCE [LARGE SCALE GENOMIC DNA]</scope>
    <source>
        <strain>USA300</strain>
    </source>
</reference>
<reference key="2">
    <citation type="journal article" date="2023" name="IScience">
        <title>The Staphylococcus aureus protein IsdA increases SARS CoV-2 replication by modulating JAK-STAT signaling.</title>
        <authorList>
            <person name="Goncheva M.I."/>
            <person name="Gibson R.M."/>
            <person name="Shouldice A.C."/>
            <person name="Dikeakos J.D."/>
            <person name="Heinrichs D.E."/>
        </authorList>
    </citation>
    <scope>DISRUPTION PHENOTYPE</scope>
    <source>
        <strain>USA300 / LAC</strain>
    </source>
</reference>
<gene>
    <name type="primary">isdB</name>
    <name type="synonym">frpB</name>
    <name type="synonym">sasJ</name>
    <name type="synonym">sirH</name>
    <name type="ordered locus">SAUSA300_1028</name>
</gene>
<dbReference type="EMBL" id="CP000255">
    <property type="protein sequence ID" value="ABD21843.1"/>
    <property type="molecule type" value="Genomic_DNA"/>
</dbReference>
<dbReference type="RefSeq" id="WP_001041586.1">
    <property type="nucleotide sequence ID" value="NZ_CP027476.1"/>
</dbReference>
<dbReference type="SMR" id="Q2FHV2"/>
<dbReference type="KEGG" id="saa:SAUSA300_1028"/>
<dbReference type="HOGENOM" id="CLU_016167_0_0_9"/>
<dbReference type="PRO" id="PR:Q2FHV2"/>
<dbReference type="Proteomes" id="UP000001939">
    <property type="component" value="Chromosome"/>
</dbReference>
<dbReference type="GO" id="GO:0005576">
    <property type="term" value="C:extracellular region"/>
    <property type="evidence" value="ECO:0007669"/>
    <property type="project" value="UniProtKB-KW"/>
</dbReference>
<dbReference type="GO" id="GO:0015232">
    <property type="term" value="F:heme transmembrane transporter activity"/>
    <property type="evidence" value="ECO:0007669"/>
    <property type="project" value="InterPro"/>
</dbReference>
<dbReference type="GO" id="GO:0046872">
    <property type="term" value="F:metal ion binding"/>
    <property type="evidence" value="ECO:0007669"/>
    <property type="project" value="UniProtKB-KW"/>
</dbReference>
<dbReference type="CDD" id="cd06920">
    <property type="entry name" value="NEAT"/>
    <property type="match status" value="1"/>
</dbReference>
<dbReference type="Gene3D" id="1.20.58.1270">
    <property type="match status" value="1"/>
</dbReference>
<dbReference type="Gene3D" id="2.60.40.1850">
    <property type="match status" value="2"/>
</dbReference>
<dbReference type="InterPro" id="IPR019929">
    <property type="entry name" value="Iron-reg_IsdB"/>
</dbReference>
<dbReference type="InterPro" id="IPR048652">
    <property type="entry name" value="Isd_H_B_linker"/>
</dbReference>
<dbReference type="InterPro" id="IPR050436">
    <property type="entry name" value="IsdA"/>
</dbReference>
<dbReference type="InterPro" id="IPR019931">
    <property type="entry name" value="LPXTG_anchor"/>
</dbReference>
<dbReference type="InterPro" id="IPR006635">
    <property type="entry name" value="NEAT_dom"/>
</dbReference>
<dbReference type="InterPro" id="IPR037250">
    <property type="entry name" value="NEAT_dom_sf"/>
</dbReference>
<dbReference type="InterPro" id="IPR005877">
    <property type="entry name" value="YSIRK_signal_dom"/>
</dbReference>
<dbReference type="NCBIfam" id="TIGR03657">
    <property type="entry name" value="IsdB"/>
    <property type="match status" value="1"/>
</dbReference>
<dbReference type="NCBIfam" id="TIGR01167">
    <property type="entry name" value="LPXTG_anchor"/>
    <property type="match status" value="1"/>
</dbReference>
<dbReference type="NCBIfam" id="TIGR01168">
    <property type="entry name" value="YSIRK_signal"/>
    <property type="match status" value="1"/>
</dbReference>
<dbReference type="PANTHER" id="PTHR37824">
    <property type="entry name" value="IRON-REGULATED SURFACE DETERMINANT PROTEIN C"/>
    <property type="match status" value="1"/>
</dbReference>
<dbReference type="PANTHER" id="PTHR37824:SF1">
    <property type="entry name" value="IRON-REGULATED SURFACE DETERMINANT PROTEIN C"/>
    <property type="match status" value="1"/>
</dbReference>
<dbReference type="Pfam" id="PF00746">
    <property type="entry name" value="Gram_pos_anchor"/>
    <property type="match status" value="1"/>
</dbReference>
<dbReference type="Pfam" id="PF20861">
    <property type="entry name" value="Isd_H_B_linker"/>
    <property type="match status" value="1"/>
</dbReference>
<dbReference type="Pfam" id="PF05031">
    <property type="entry name" value="NEAT"/>
    <property type="match status" value="2"/>
</dbReference>
<dbReference type="Pfam" id="PF04650">
    <property type="entry name" value="YSIRK_signal"/>
    <property type="match status" value="1"/>
</dbReference>
<dbReference type="SMART" id="SM00725">
    <property type="entry name" value="NEAT"/>
    <property type="match status" value="2"/>
</dbReference>
<dbReference type="SUPFAM" id="SSF158911">
    <property type="entry name" value="NEAT domain-like"/>
    <property type="match status" value="2"/>
</dbReference>
<dbReference type="PROSITE" id="PS50847">
    <property type="entry name" value="GRAM_POS_ANCHORING"/>
    <property type="match status" value="1"/>
</dbReference>
<dbReference type="PROSITE" id="PS50978">
    <property type="entry name" value="NEAT"/>
    <property type="match status" value="2"/>
</dbReference>
<comment type="function">
    <text evidence="2">Cell wall-anchored surface receptor that extracts heme from oxidized metHb to enable growth on hemoglobin as a sole iron source. Rapidly extracts heme from hemoglobin and transfers it to IsdA or IsdC, which then relays it to the membrane transporter/IsdEF for internalization. Also promotes resistance to hydrogen peroxide and killing by neutrophils.</text>
</comment>
<comment type="subunit">
    <text evidence="2">Interacts with host HBA; this interaction allows heme extraction as iron source. Interacts with IsdA.</text>
</comment>
<comment type="subcellular location">
    <subcellularLocation>
        <location evidence="2">Secreted</location>
        <location evidence="2">Cell wall</location>
        <topology evidence="2">Peptidoglycan-anchor</topology>
    </subcellularLocation>
    <text evidence="2">Anchored to the cell wall by sortase A.</text>
</comment>
<comment type="induction">
    <text evidence="1">Repressed by fur in the presence of iron.</text>
</comment>
<comment type="disruption phenotype">
    <text evidence="9">Bacteria no longer enhance SARS-CoV-2 replication in host (green monkey kidney Vero E6 cells) cells. Note the phenotype is not restored by wild-type protein.</text>
</comment>
<comment type="similarity">
    <text evidence="10">Belongs to the IsdB family.</text>
</comment>
<evidence type="ECO:0000250" key="1"/>
<evidence type="ECO:0000250" key="2">
    <source>
        <dbReference type="UniProtKB" id="A6QG30"/>
    </source>
</evidence>
<evidence type="ECO:0000250" key="3">
    <source>
        <dbReference type="UniProtKB" id="Q2FZF0"/>
    </source>
</evidence>
<evidence type="ECO:0000250" key="4">
    <source>
        <dbReference type="UniProtKB" id="Q7A656"/>
    </source>
</evidence>
<evidence type="ECO:0000255" key="5"/>
<evidence type="ECO:0000255" key="6">
    <source>
        <dbReference type="PROSITE-ProRule" id="PRU00337"/>
    </source>
</evidence>
<evidence type="ECO:0000255" key="7">
    <source>
        <dbReference type="PROSITE-ProRule" id="PRU00477"/>
    </source>
</evidence>
<evidence type="ECO:0000256" key="8">
    <source>
        <dbReference type="SAM" id="MobiDB-lite"/>
    </source>
</evidence>
<evidence type="ECO:0000269" key="9">
    <source>
    </source>
</evidence>
<evidence type="ECO:0000305" key="10"/>
<name>ISDB_STAA3</name>
<proteinExistence type="inferred from homology"/>
<organism>
    <name type="scientific">Staphylococcus aureus (strain USA300)</name>
    <dbReference type="NCBI Taxonomy" id="367830"/>
    <lineage>
        <taxon>Bacteria</taxon>
        <taxon>Bacillati</taxon>
        <taxon>Bacillota</taxon>
        <taxon>Bacilli</taxon>
        <taxon>Bacillales</taxon>
        <taxon>Staphylococcaceae</taxon>
        <taxon>Staphylococcus</taxon>
    </lineage>
</organism>
<protein>
    <recommendedName>
        <fullName>Iron-regulated surface determinant protein B</fullName>
    </recommendedName>
    <alternativeName>
        <fullName>Fur-regulated protein B</fullName>
    </alternativeName>
    <alternativeName>
        <fullName>Staphylococcal iron-regulated protein H</fullName>
    </alternativeName>
    <alternativeName>
        <fullName>Staphylococcus aureus surface protein J</fullName>
    </alternativeName>
</protein>
<keyword id="KW-0134">Cell wall</keyword>
<keyword id="KW-0349">Heme</keyword>
<keyword id="KW-0408">Iron</keyword>
<keyword id="KW-0479">Metal-binding</keyword>
<keyword id="KW-0572">Peptidoglycan-anchor</keyword>
<keyword id="KW-0677">Repeat</keyword>
<keyword id="KW-0964">Secreted</keyword>
<keyword id="KW-0732">Signal</keyword>
<keyword id="KW-0843">Virulence</keyword>
<sequence>MNKQQKEFKSFYSIRKSSLGVASVAISTLLLLMSNGEAQAAAEETGGTNTEAQPKTEAVASPTTTSEKAPETKPVANAVSVSNKEVEAPTSETKEAKEVKEVKAPKETKEVKPAAKATNNTYPILNQELREAIKNPAIKDKDHSAPNSRPIDFEMKKKDGTQQFYHYASSVKPARVIFTDSKPEIELGLQSGQFWRKFEVYEGDKKLPIKLVSYDTVKDYAYIRFSVSNGTKAVKIVSSTHFNNKEEKYDYTLMEFAQPIYNSADKFKTEEDYKAEKLLAPYKKAKTLERQVYELNKIQDKLPEKLKAEYKKKLEDTKKALDEQVKSAITEFQNVQPTNEKMTDLQDTKYVVYESVENNESMMDTFVKHPIKTGMLNGKKYMVMETTNDDYWKDFMVEGQRVRTISKDAKNNTRTIIFPYVEGKTLYDAIVKVHVKTIDYDGQYHVRIVDKEAFTKANTDKSNKKEQQDNSAKKEATPATPSKPTPSPVEKESQKQDSQKDDNKQLPSVEKENDASSESGKDKTPATKPTKGEVESSSTTPTKVVSTTQNVAKPTTASSKTTKDVVQTSAGSSEAKDSAPLQKANIKNTNDGHTQSQNNKNTQENKAKSLPQTGEESNKDMTLPLMALLALSSIVAFVLPRKRKN</sequence>
<accession>Q2FHV2</accession>